<protein>
    <recommendedName>
        <fullName evidence="1">Large ribosomal subunit protein uL15</fullName>
    </recommendedName>
    <alternativeName>
        <fullName evidence="3">50S ribosomal protein L15</fullName>
    </alternativeName>
</protein>
<gene>
    <name evidence="1" type="primary">rplO</name>
    <name type="ordered locus">BBta_5051</name>
</gene>
<name>RL15_BRASB</name>
<comment type="function">
    <text evidence="1">Binds to the 23S rRNA.</text>
</comment>
<comment type="subunit">
    <text evidence="1">Part of the 50S ribosomal subunit.</text>
</comment>
<comment type="similarity">
    <text evidence="1">Belongs to the universal ribosomal protein uL15 family.</text>
</comment>
<feature type="chain" id="PRO_1000054431" description="Large ribosomal subunit protein uL15">
    <location>
        <begin position="1"/>
        <end position="161"/>
    </location>
</feature>
<feature type="region of interest" description="Disordered" evidence="2">
    <location>
        <begin position="1"/>
        <end position="43"/>
    </location>
</feature>
<feature type="compositionally biased region" description="Gly residues" evidence="2">
    <location>
        <begin position="21"/>
        <end position="37"/>
    </location>
</feature>
<dbReference type="EMBL" id="CP000494">
    <property type="protein sequence ID" value="ABQ37052.1"/>
    <property type="molecule type" value="Genomic_DNA"/>
</dbReference>
<dbReference type="RefSeq" id="WP_012045033.1">
    <property type="nucleotide sequence ID" value="NC_009485.1"/>
</dbReference>
<dbReference type="SMR" id="A5ELK8"/>
<dbReference type="STRING" id="288000.BBta_5051"/>
<dbReference type="KEGG" id="bbt:BBta_5051"/>
<dbReference type="eggNOG" id="COG0200">
    <property type="taxonomic scope" value="Bacteria"/>
</dbReference>
<dbReference type="HOGENOM" id="CLU_055188_4_0_5"/>
<dbReference type="OrthoDB" id="9810293at2"/>
<dbReference type="Proteomes" id="UP000000246">
    <property type="component" value="Chromosome"/>
</dbReference>
<dbReference type="GO" id="GO:0022625">
    <property type="term" value="C:cytosolic large ribosomal subunit"/>
    <property type="evidence" value="ECO:0007669"/>
    <property type="project" value="TreeGrafter"/>
</dbReference>
<dbReference type="GO" id="GO:0019843">
    <property type="term" value="F:rRNA binding"/>
    <property type="evidence" value="ECO:0007669"/>
    <property type="project" value="UniProtKB-UniRule"/>
</dbReference>
<dbReference type="GO" id="GO:0003735">
    <property type="term" value="F:structural constituent of ribosome"/>
    <property type="evidence" value="ECO:0007669"/>
    <property type="project" value="InterPro"/>
</dbReference>
<dbReference type="GO" id="GO:0006412">
    <property type="term" value="P:translation"/>
    <property type="evidence" value="ECO:0007669"/>
    <property type="project" value="UniProtKB-UniRule"/>
</dbReference>
<dbReference type="Gene3D" id="3.100.10.10">
    <property type="match status" value="1"/>
</dbReference>
<dbReference type="HAMAP" id="MF_01341">
    <property type="entry name" value="Ribosomal_uL15"/>
    <property type="match status" value="1"/>
</dbReference>
<dbReference type="InterPro" id="IPR030878">
    <property type="entry name" value="Ribosomal_uL15"/>
</dbReference>
<dbReference type="InterPro" id="IPR021131">
    <property type="entry name" value="Ribosomal_uL15/eL18"/>
</dbReference>
<dbReference type="InterPro" id="IPR036227">
    <property type="entry name" value="Ribosomal_uL15/eL18_sf"/>
</dbReference>
<dbReference type="InterPro" id="IPR005749">
    <property type="entry name" value="Ribosomal_uL15_bac-type"/>
</dbReference>
<dbReference type="InterPro" id="IPR001196">
    <property type="entry name" value="Ribosomal_uL15_CS"/>
</dbReference>
<dbReference type="NCBIfam" id="TIGR01071">
    <property type="entry name" value="rplO_bact"/>
    <property type="match status" value="1"/>
</dbReference>
<dbReference type="PANTHER" id="PTHR12934">
    <property type="entry name" value="50S RIBOSOMAL PROTEIN L15"/>
    <property type="match status" value="1"/>
</dbReference>
<dbReference type="PANTHER" id="PTHR12934:SF11">
    <property type="entry name" value="LARGE RIBOSOMAL SUBUNIT PROTEIN UL15M"/>
    <property type="match status" value="1"/>
</dbReference>
<dbReference type="Pfam" id="PF00828">
    <property type="entry name" value="Ribosomal_L27A"/>
    <property type="match status" value="1"/>
</dbReference>
<dbReference type="SUPFAM" id="SSF52080">
    <property type="entry name" value="Ribosomal proteins L15p and L18e"/>
    <property type="match status" value="1"/>
</dbReference>
<dbReference type="PROSITE" id="PS00475">
    <property type="entry name" value="RIBOSOMAL_L15"/>
    <property type="match status" value="1"/>
</dbReference>
<accession>A5ELK8</accession>
<organism>
    <name type="scientific">Bradyrhizobium sp. (strain BTAi1 / ATCC BAA-1182)</name>
    <dbReference type="NCBI Taxonomy" id="288000"/>
    <lineage>
        <taxon>Bacteria</taxon>
        <taxon>Pseudomonadati</taxon>
        <taxon>Pseudomonadota</taxon>
        <taxon>Alphaproteobacteria</taxon>
        <taxon>Hyphomicrobiales</taxon>
        <taxon>Nitrobacteraceae</taxon>
        <taxon>Bradyrhizobium</taxon>
    </lineage>
</organism>
<keyword id="KW-1185">Reference proteome</keyword>
<keyword id="KW-0687">Ribonucleoprotein</keyword>
<keyword id="KW-0689">Ribosomal protein</keyword>
<keyword id="KW-0694">RNA-binding</keyword>
<keyword id="KW-0699">rRNA-binding</keyword>
<proteinExistence type="inferred from homology"/>
<sequence>MKLSDIADNAGARKKRMRVGRGIGSGKGKTSGRGGKGQTARSGVRIKGFEGGQMPMHRRLPKRGFNNIFALDFVEINLDRIQQAIDAKKLDAGSVINAEALVKSGALRRAKDGVRLLGRGEITAKVNIEVHGASKSAIAAVEKAGGTVKLLAPAKDEGEAA</sequence>
<evidence type="ECO:0000255" key="1">
    <source>
        <dbReference type="HAMAP-Rule" id="MF_01341"/>
    </source>
</evidence>
<evidence type="ECO:0000256" key="2">
    <source>
        <dbReference type="SAM" id="MobiDB-lite"/>
    </source>
</evidence>
<evidence type="ECO:0000305" key="3"/>
<reference key="1">
    <citation type="journal article" date="2007" name="Science">
        <title>Legumes symbioses: absence of nod genes in photosynthetic bradyrhizobia.</title>
        <authorList>
            <person name="Giraud E."/>
            <person name="Moulin L."/>
            <person name="Vallenet D."/>
            <person name="Barbe V."/>
            <person name="Cytryn E."/>
            <person name="Avarre J.-C."/>
            <person name="Jaubert M."/>
            <person name="Simon D."/>
            <person name="Cartieaux F."/>
            <person name="Prin Y."/>
            <person name="Bena G."/>
            <person name="Hannibal L."/>
            <person name="Fardoux J."/>
            <person name="Kojadinovic M."/>
            <person name="Vuillet L."/>
            <person name="Lajus A."/>
            <person name="Cruveiller S."/>
            <person name="Rouy Z."/>
            <person name="Mangenot S."/>
            <person name="Segurens B."/>
            <person name="Dossat C."/>
            <person name="Franck W.L."/>
            <person name="Chang W.-S."/>
            <person name="Saunders E."/>
            <person name="Bruce D."/>
            <person name="Richardson P."/>
            <person name="Normand P."/>
            <person name="Dreyfus B."/>
            <person name="Pignol D."/>
            <person name="Stacey G."/>
            <person name="Emerich D."/>
            <person name="Vermeglio A."/>
            <person name="Medigue C."/>
            <person name="Sadowsky M."/>
        </authorList>
    </citation>
    <scope>NUCLEOTIDE SEQUENCE [LARGE SCALE GENOMIC DNA]</scope>
    <source>
        <strain>BTAi1 / ATCC BAA-1182</strain>
    </source>
</reference>